<comment type="cofactor">
    <cofactor evidence="1">
        <name>heme</name>
        <dbReference type="ChEBI" id="CHEBI:30413"/>
    </cofactor>
</comment>
<comment type="subcellular location">
    <subcellularLocation>
        <location evidence="3">Membrane</location>
        <topology evidence="3">Single-pass membrane protein</topology>
    </subcellularLocation>
</comment>
<comment type="similarity">
    <text evidence="3">Belongs to the cytochrome P450 family.</text>
</comment>
<evidence type="ECO:0000250" key="1"/>
<evidence type="ECO:0000255" key="2"/>
<evidence type="ECO:0000305" key="3"/>
<sequence>MNLYISILILIISLIIFFKNNNRISKINSKIPGPIRLPIFGNLLQINKDPHIQFQKWYEKYGVIYSIRLGNIETVVFTGYPIFKKAFIENSQIFAPRFQHLSRFEANGCKNLIGSNDEIHSTLKKLILTEITSNKIKKMENHIVLECENLCKQLDKHCQDGLPFSLNMYFKLFSLNIILRFLFGTINNSYQDKSNQDIVDVIIEFLHYGGNPIMSDFIPILKPFYKQNKFFKFYPILCDHLNKLIENYKNNKQLQKQQKQQQNEDDDDDDDGTIIGKLLKEYHNGKISWTSVVSTCVDVFLAGVDSTSNSTIFTLIALVNNSNCQEKLFNEIKNNLKKSDDGHDEIVIRHSLYRSSIPYLSLVMKEVYRLYSVILIGLPHITSEDVEIEGYKIAKGTQIIQNVFSTHLCEKTFPMSKSFIPERFIETGSNNMFGGGQTNLVHFGTGVRDCVGKSLADCEIFTVLATLINRYQFINPTLEPLNDIGSFGIAYQPPINNFIIKKRL</sequence>
<dbReference type="EC" id="1.14.-.-"/>
<dbReference type="EMBL" id="AAFI02000047">
    <property type="protein sequence ID" value="EAL66298.1"/>
    <property type="molecule type" value="Genomic_DNA"/>
</dbReference>
<dbReference type="RefSeq" id="XP_640271.1">
    <property type="nucleotide sequence ID" value="XM_635179.1"/>
</dbReference>
<dbReference type="SMR" id="Q54SN0"/>
<dbReference type="STRING" id="44689.Q54SN0"/>
<dbReference type="PaxDb" id="44689-DDB0232342"/>
<dbReference type="EnsemblProtists" id="EAL66298">
    <property type="protein sequence ID" value="EAL66298"/>
    <property type="gene ID" value="DDB_G0282353"/>
</dbReference>
<dbReference type="GeneID" id="8623532"/>
<dbReference type="KEGG" id="ddi:DDB_G0282353"/>
<dbReference type="dictyBase" id="DDB_G0282353">
    <property type="gene designation" value="cyp513E1"/>
</dbReference>
<dbReference type="VEuPathDB" id="AmoebaDB:DDB_G0282353"/>
<dbReference type="eggNOG" id="KOG0156">
    <property type="taxonomic scope" value="Eukaryota"/>
</dbReference>
<dbReference type="HOGENOM" id="CLU_001570_22_0_1"/>
<dbReference type="InParanoid" id="Q54SN0"/>
<dbReference type="OMA" id="YVNAFIA"/>
<dbReference type="PhylomeDB" id="Q54SN0"/>
<dbReference type="PRO" id="PR:Q54SN0"/>
<dbReference type="Proteomes" id="UP000002195">
    <property type="component" value="Chromosome 3"/>
</dbReference>
<dbReference type="GO" id="GO:0016020">
    <property type="term" value="C:membrane"/>
    <property type="evidence" value="ECO:0007669"/>
    <property type="project" value="UniProtKB-SubCell"/>
</dbReference>
<dbReference type="GO" id="GO:0020037">
    <property type="term" value="F:heme binding"/>
    <property type="evidence" value="ECO:0007669"/>
    <property type="project" value="InterPro"/>
</dbReference>
<dbReference type="GO" id="GO:0005506">
    <property type="term" value="F:iron ion binding"/>
    <property type="evidence" value="ECO:0007669"/>
    <property type="project" value="InterPro"/>
</dbReference>
<dbReference type="GO" id="GO:0004497">
    <property type="term" value="F:monooxygenase activity"/>
    <property type="evidence" value="ECO:0007669"/>
    <property type="project" value="UniProtKB-KW"/>
</dbReference>
<dbReference type="GO" id="GO:0016705">
    <property type="term" value="F:oxidoreductase activity, acting on paired donors, with incorporation or reduction of molecular oxygen"/>
    <property type="evidence" value="ECO:0007669"/>
    <property type="project" value="InterPro"/>
</dbReference>
<dbReference type="CDD" id="cd20617">
    <property type="entry name" value="CYP1_2-like"/>
    <property type="match status" value="1"/>
</dbReference>
<dbReference type="Gene3D" id="1.10.630.10">
    <property type="entry name" value="Cytochrome P450"/>
    <property type="match status" value="1"/>
</dbReference>
<dbReference type="InterPro" id="IPR001128">
    <property type="entry name" value="Cyt_P450"/>
</dbReference>
<dbReference type="InterPro" id="IPR017972">
    <property type="entry name" value="Cyt_P450_CS"/>
</dbReference>
<dbReference type="InterPro" id="IPR002401">
    <property type="entry name" value="Cyt_P450_E_grp-I"/>
</dbReference>
<dbReference type="InterPro" id="IPR036396">
    <property type="entry name" value="Cyt_P450_sf"/>
</dbReference>
<dbReference type="PANTHER" id="PTHR24303:SF11">
    <property type="entry name" value="CYTOCHROME P450 513A1-RELATED"/>
    <property type="match status" value="1"/>
</dbReference>
<dbReference type="PANTHER" id="PTHR24303">
    <property type="entry name" value="HEME-BINDING MONOOXYGENASE FAMILY"/>
    <property type="match status" value="1"/>
</dbReference>
<dbReference type="Pfam" id="PF00067">
    <property type="entry name" value="p450"/>
    <property type="match status" value="1"/>
</dbReference>
<dbReference type="PRINTS" id="PR00463">
    <property type="entry name" value="EP450I"/>
</dbReference>
<dbReference type="PRINTS" id="PR00385">
    <property type="entry name" value="P450"/>
</dbReference>
<dbReference type="SUPFAM" id="SSF48264">
    <property type="entry name" value="Cytochrome P450"/>
    <property type="match status" value="1"/>
</dbReference>
<dbReference type="PROSITE" id="PS00086">
    <property type="entry name" value="CYTOCHROME_P450"/>
    <property type="match status" value="1"/>
</dbReference>
<accession>Q54SN0</accession>
<name>C513E_DICDI</name>
<protein>
    <recommendedName>
        <fullName>Probable cytochrome P450 513E1</fullName>
        <ecNumber>1.14.-.-</ecNumber>
    </recommendedName>
</protein>
<organism>
    <name type="scientific">Dictyostelium discoideum</name>
    <name type="common">Social amoeba</name>
    <dbReference type="NCBI Taxonomy" id="44689"/>
    <lineage>
        <taxon>Eukaryota</taxon>
        <taxon>Amoebozoa</taxon>
        <taxon>Evosea</taxon>
        <taxon>Eumycetozoa</taxon>
        <taxon>Dictyostelia</taxon>
        <taxon>Dictyosteliales</taxon>
        <taxon>Dictyosteliaceae</taxon>
        <taxon>Dictyostelium</taxon>
    </lineage>
</organism>
<keyword id="KW-0349">Heme</keyword>
<keyword id="KW-0408">Iron</keyword>
<keyword id="KW-0472">Membrane</keyword>
<keyword id="KW-0479">Metal-binding</keyword>
<keyword id="KW-0503">Monooxygenase</keyword>
<keyword id="KW-0560">Oxidoreductase</keyword>
<keyword id="KW-1185">Reference proteome</keyword>
<keyword id="KW-0812">Transmembrane</keyword>
<keyword id="KW-1133">Transmembrane helix</keyword>
<reference key="1">
    <citation type="journal article" date="2005" name="Nature">
        <title>The genome of the social amoeba Dictyostelium discoideum.</title>
        <authorList>
            <person name="Eichinger L."/>
            <person name="Pachebat J.A."/>
            <person name="Gloeckner G."/>
            <person name="Rajandream M.A."/>
            <person name="Sucgang R."/>
            <person name="Berriman M."/>
            <person name="Song J."/>
            <person name="Olsen R."/>
            <person name="Szafranski K."/>
            <person name="Xu Q."/>
            <person name="Tunggal B."/>
            <person name="Kummerfeld S."/>
            <person name="Madera M."/>
            <person name="Konfortov B.A."/>
            <person name="Rivero F."/>
            <person name="Bankier A.T."/>
            <person name="Lehmann R."/>
            <person name="Hamlin N."/>
            <person name="Davies R."/>
            <person name="Gaudet P."/>
            <person name="Fey P."/>
            <person name="Pilcher K."/>
            <person name="Chen G."/>
            <person name="Saunders D."/>
            <person name="Sodergren E.J."/>
            <person name="Davis P."/>
            <person name="Kerhornou A."/>
            <person name="Nie X."/>
            <person name="Hall N."/>
            <person name="Anjard C."/>
            <person name="Hemphill L."/>
            <person name="Bason N."/>
            <person name="Farbrother P."/>
            <person name="Desany B."/>
            <person name="Just E."/>
            <person name="Morio T."/>
            <person name="Rost R."/>
            <person name="Churcher C.M."/>
            <person name="Cooper J."/>
            <person name="Haydock S."/>
            <person name="van Driessche N."/>
            <person name="Cronin A."/>
            <person name="Goodhead I."/>
            <person name="Muzny D.M."/>
            <person name="Mourier T."/>
            <person name="Pain A."/>
            <person name="Lu M."/>
            <person name="Harper D."/>
            <person name="Lindsay R."/>
            <person name="Hauser H."/>
            <person name="James K.D."/>
            <person name="Quiles M."/>
            <person name="Madan Babu M."/>
            <person name="Saito T."/>
            <person name="Buchrieser C."/>
            <person name="Wardroper A."/>
            <person name="Felder M."/>
            <person name="Thangavelu M."/>
            <person name="Johnson D."/>
            <person name="Knights A."/>
            <person name="Loulseged H."/>
            <person name="Mungall K.L."/>
            <person name="Oliver K."/>
            <person name="Price C."/>
            <person name="Quail M.A."/>
            <person name="Urushihara H."/>
            <person name="Hernandez J."/>
            <person name="Rabbinowitsch E."/>
            <person name="Steffen D."/>
            <person name="Sanders M."/>
            <person name="Ma J."/>
            <person name="Kohara Y."/>
            <person name="Sharp S."/>
            <person name="Simmonds M.N."/>
            <person name="Spiegler S."/>
            <person name="Tivey A."/>
            <person name="Sugano S."/>
            <person name="White B."/>
            <person name="Walker D."/>
            <person name="Woodward J.R."/>
            <person name="Winckler T."/>
            <person name="Tanaka Y."/>
            <person name="Shaulsky G."/>
            <person name="Schleicher M."/>
            <person name="Weinstock G.M."/>
            <person name="Rosenthal A."/>
            <person name="Cox E.C."/>
            <person name="Chisholm R.L."/>
            <person name="Gibbs R.A."/>
            <person name="Loomis W.F."/>
            <person name="Platzer M."/>
            <person name="Kay R.R."/>
            <person name="Williams J.G."/>
            <person name="Dear P.H."/>
            <person name="Noegel A.A."/>
            <person name="Barrell B.G."/>
            <person name="Kuspa A."/>
        </authorList>
    </citation>
    <scope>NUCLEOTIDE SEQUENCE [LARGE SCALE GENOMIC DNA]</scope>
    <source>
        <strain>AX4</strain>
    </source>
</reference>
<feature type="chain" id="PRO_0000318818" description="Probable cytochrome P450 513E1">
    <location>
        <begin position="1"/>
        <end position="504"/>
    </location>
</feature>
<feature type="transmembrane region" description="Helical" evidence="2">
    <location>
        <begin position="1"/>
        <end position="21"/>
    </location>
</feature>
<feature type="binding site" description="axial binding residue" evidence="1">
    <location>
        <position position="450"/>
    </location>
    <ligand>
        <name>heme</name>
        <dbReference type="ChEBI" id="CHEBI:30413"/>
    </ligand>
    <ligandPart>
        <name>Fe</name>
        <dbReference type="ChEBI" id="CHEBI:18248"/>
    </ligandPart>
</feature>
<gene>
    <name type="primary">cyp513E1</name>
    <name type="ORF">DDB_G0282353</name>
</gene>
<proteinExistence type="inferred from homology"/>